<protein>
    <recommendedName>
        <fullName evidence="1">Tetraacyldisaccharide 4'-kinase</fullName>
        <ecNumber evidence="1">2.7.1.130</ecNumber>
    </recommendedName>
    <alternativeName>
        <fullName evidence="1">Lipid A 4'-kinase</fullName>
    </alternativeName>
</protein>
<gene>
    <name evidence="1" type="primary">lpxK</name>
    <name type="ordered locus">Atu0697</name>
    <name type="ORF">AGR_C_1257</name>
</gene>
<dbReference type="EC" id="2.7.1.130" evidence="1"/>
<dbReference type="EMBL" id="AE007869">
    <property type="protein sequence ID" value="AAK86507.1"/>
    <property type="molecule type" value="Genomic_DNA"/>
</dbReference>
<dbReference type="PIR" id="AC2662">
    <property type="entry name" value="AC2662"/>
</dbReference>
<dbReference type="PIR" id="B97444">
    <property type="entry name" value="B97444"/>
</dbReference>
<dbReference type="RefSeq" id="NP_353722.1">
    <property type="nucleotide sequence ID" value="NC_003062.2"/>
</dbReference>
<dbReference type="RefSeq" id="WP_010971079.1">
    <property type="nucleotide sequence ID" value="NC_003062.2"/>
</dbReference>
<dbReference type="SMR" id="Q8UHI5"/>
<dbReference type="STRING" id="176299.Atu0697"/>
<dbReference type="EnsemblBacteria" id="AAK86507">
    <property type="protein sequence ID" value="AAK86507"/>
    <property type="gene ID" value="Atu0697"/>
</dbReference>
<dbReference type="GeneID" id="1132735"/>
<dbReference type="KEGG" id="atu:Atu0697"/>
<dbReference type="PATRIC" id="fig|176299.10.peg.694"/>
<dbReference type="eggNOG" id="COG1663">
    <property type="taxonomic scope" value="Bacteria"/>
</dbReference>
<dbReference type="HOGENOM" id="CLU_038816_0_0_5"/>
<dbReference type="OrthoDB" id="9766423at2"/>
<dbReference type="PhylomeDB" id="Q8UHI5"/>
<dbReference type="BioCyc" id="AGRO:ATU0697-MONOMER"/>
<dbReference type="UniPathway" id="UPA00359">
    <property type="reaction ID" value="UER00482"/>
</dbReference>
<dbReference type="Proteomes" id="UP000000813">
    <property type="component" value="Chromosome circular"/>
</dbReference>
<dbReference type="GO" id="GO:0005886">
    <property type="term" value="C:plasma membrane"/>
    <property type="evidence" value="ECO:0007669"/>
    <property type="project" value="TreeGrafter"/>
</dbReference>
<dbReference type="GO" id="GO:0005524">
    <property type="term" value="F:ATP binding"/>
    <property type="evidence" value="ECO:0007669"/>
    <property type="project" value="UniProtKB-UniRule"/>
</dbReference>
<dbReference type="GO" id="GO:0009029">
    <property type="term" value="F:tetraacyldisaccharide 4'-kinase activity"/>
    <property type="evidence" value="ECO:0007669"/>
    <property type="project" value="UniProtKB-UniRule"/>
</dbReference>
<dbReference type="GO" id="GO:0009245">
    <property type="term" value="P:lipid A biosynthetic process"/>
    <property type="evidence" value="ECO:0007669"/>
    <property type="project" value="UniProtKB-UniRule"/>
</dbReference>
<dbReference type="GO" id="GO:0009244">
    <property type="term" value="P:lipopolysaccharide core region biosynthetic process"/>
    <property type="evidence" value="ECO:0007669"/>
    <property type="project" value="TreeGrafter"/>
</dbReference>
<dbReference type="HAMAP" id="MF_00409">
    <property type="entry name" value="LpxK"/>
    <property type="match status" value="1"/>
</dbReference>
<dbReference type="InterPro" id="IPR003758">
    <property type="entry name" value="LpxK"/>
</dbReference>
<dbReference type="InterPro" id="IPR027417">
    <property type="entry name" value="P-loop_NTPase"/>
</dbReference>
<dbReference type="NCBIfam" id="TIGR00682">
    <property type="entry name" value="lpxK"/>
    <property type="match status" value="1"/>
</dbReference>
<dbReference type="PANTHER" id="PTHR42724">
    <property type="entry name" value="TETRAACYLDISACCHARIDE 4'-KINASE"/>
    <property type="match status" value="1"/>
</dbReference>
<dbReference type="PANTHER" id="PTHR42724:SF1">
    <property type="entry name" value="TETRAACYLDISACCHARIDE 4'-KINASE, MITOCHONDRIAL-RELATED"/>
    <property type="match status" value="1"/>
</dbReference>
<dbReference type="Pfam" id="PF02606">
    <property type="entry name" value="LpxK"/>
    <property type="match status" value="1"/>
</dbReference>
<dbReference type="SUPFAM" id="SSF52540">
    <property type="entry name" value="P-loop containing nucleoside triphosphate hydrolases"/>
    <property type="match status" value="1"/>
</dbReference>
<reference key="1">
    <citation type="journal article" date="2001" name="Science">
        <title>The genome of the natural genetic engineer Agrobacterium tumefaciens C58.</title>
        <authorList>
            <person name="Wood D.W."/>
            <person name="Setubal J.C."/>
            <person name="Kaul R."/>
            <person name="Monks D.E."/>
            <person name="Kitajima J.P."/>
            <person name="Okura V.K."/>
            <person name="Zhou Y."/>
            <person name="Chen L."/>
            <person name="Wood G.E."/>
            <person name="Almeida N.F. Jr."/>
            <person name="Woo L."/>
            <person name="Chen Y."/>
            <person name="Paulsen I.T."/>
            <person name="Eisen J.A."/>
            <person name="Karp P.D."/>
            <person name="Bovee D. Sr."/>
            <person name="Chapman P."/>
            <person name="Clendenning J."/>
            <person name="Deatherage G."/>
            <person name="Gillet W."/>
            <person name="Grant C."/>
            <person name="Kutyavin T."/>
            <person name="Levy R."/>
            <person name="Li M.-J."/>
            <person name="McClelland E."/>
            <person name="Palmieri A."/>
            <person name="Raymond C."/>
            <person name="Rouse G."/>
            <person name="Saenphimmachak C."/>
            <person name="Wu Z."/>
            <person name="Romero P."/>
            <person name="Gordon D."/>
            <person name="Zhang S."/>
            <person name="Yoo H."/>
            <person name="Tao Y."/>
            <person name="Biddle P."/>
            <person name="Jung M."/>
            <person name="Krespan W."/>
            <person name="Perry M."/>
            <person name="Gordon-Kamm B."/>
            <person name="Liao L."/>
            <person name="Kim S."/>
            <person name="Hendrick C."/>
            <person name="Zhao Z.-Y."/>
            <person name="Dolan M."/>
            <person name="Chumley F."/>
            <person name="Tingey S.V."/>
            <person name="Tomb J.-F."/>
            <person name="Gordon M.P."/>
            <person name="Olson M.V."/>
            <person name="Nester E.W."/>
        </authorList>
    </citation>
    <scope>NUCLEOTIDE SEQUENCE [LARGE SCALE GENOMIC DNA]</scope>
    <source>
        <strain>C58 / ATCC 33970</strain>
    </source>
</reference>
<reference key="2">
    <citation type="journal article" date="2001" name="Science">
        <title>Genome sequence of the plant pathogen and biotechnology agent Agrobacterium tumefaciens C58.</title>
        <authorList>
            <person name="Goodner B."/>
            <person name="Hinkle G."/>
            <person name="Gattung S."/>
            <person name="Miller N."/>
            <person name="Blanchard M."/>
            <person name="Qurollo B."/>
            <person name="Goldman B.S."/>
            <person name="Cao Y."/>
            <person name="Askenazi M."/>
            <person name="Halling C."/>
            <person name="Mullin L."/>
            <person name="Houmiel K."/>
            <person name="Gordon J."/>
            <person name="Vaudin M."/>
            <person name="Iartchouk O."/>
            <person name="Epp A."/>
            <person name="Liu F."/>
            <person name="Wollam C."/>
            <person name="Allinger M."/>
            <person name="Doughty D."/>
            <person name="Scott C."/>
            <person name="Lappas C."/>
            <person name="Markelz B."/>
            <person name="Flanagan C."/>
            <person name="Crowell C."/>
            <person name="Gurson J."/>
            <person name="Lomo C."/>
            <person name="Sear C."/>
            <person name="Strub G."/>
            <person name="Cielo C."/>
            <person name="Slater S."/>
        </authorList>
    </citation>
    <scope>NUCLEOTIDE SEQUENCE [LARGE SCALE GENOMIC DNA]</scope>
    <source>
        <strain>C58 / ATCC 33970</strain>
    </source>
</reference>
<evidence type="ECO:0000255" key="1">
    <source>
        <dbReference type="HAMAP-Rule" id="MF_00409"/>
    </source>
</evidence>
<organism>
    <name type="scientific">Agrobacterium fabrum (strain C58 / ATCC 33970)</name>
    <name type="common">Agrobacterium tumefaciens (strain C58)</name>
    <dbReference type="NCBI Taxonomy" id="176299"/>
    <lineage>
        <taxon>Bacteria</taxon>
        <taxon>Pseudomonadati</taxon>
        <taxon>Pseudomonadota</taxon>
        <taxon>Alphaproteobacteria</taxon>
        <taxon>Hyphomicrobiales</taxon>
        <taxon>Rhizobiaceae</taxon>
        <taxon>Rhizobium/Agrobacterium group</taxon>
        <taxon>Agrobacterium</taxon>
        <taxon>Agrobacterium tumefaciens complex</taxon>
    </lineage>
</organism>
<accession>Q8UHI5</accession>
<feature type="chain" id="PRO_0000190906" description="Tetraacyldisaccharide 4'-kinase">
    <location>
        <begin position="1"/>
        <end position="348"/>
    </location>
</feature>
<feature type="binding site" evidence="1">
    <location>
        <begin position="54"/>
        <end position="61"/>
    </location>
    <ligand>
        <name>ATP</name>
        <dbReference type="ChEBI" id="CHEBI:30616"/>
    </ligand>
</feature>
<keyword id="KW-0067">ATP-binding</keyword>
<keyword id="KW-0418">Kinase</keyword>
<keyword id="KW-0441">Lipid A biosynthesis</keyword>
<keyword id="KW-0444">Lipid biosynthesis</keyword>
<keyword id="KW-0443">Lipid metabolism</keyword>
<keyword id="KW-0547">Nucleotide-binding</keyword>
<keyword id="KW-1185">Reference proteome</keyword>
<keyword id="KW-0808">Transferase</keyword>
<proteinExistence type="inferred from homology"/>
<comment type="function">
    <text evidence="1">Transfers the gamma-phosphate of ATP to the 4'-position of a tetraacyldisaccharide 1-phosphate intermediate (termed DS-1-P) to form tetraacyldisaccharide 1,4'-bis-phosphate (lipid IVA).</text>
</comment>
<comment type="catalytic activity">
    <reaction evidence="1">
        <text>a lipid A disaccharide + ATP = a lipid IVA + ADP + H(+)</text>
        <dbReference type="Rhea" id="RHEA:67840"/>
        <dbReference type="ChEBI" id="CHEBI:15378"/>
        <dbReference type="ChEBI" id="CHEBI:30616"/>
        <dbReference type="ChEBI" id="CHEBI:176343"/>
        <dbReference type="ChEBI" id="CHEBI:176425"/>
        <dbReference type="ChEBI" id="CHEBI:456216"/>
        <dbReference type="EC" id="2.7.1.130"/>
    </reaction>
</comment>
<comment type="pathway">
    <text evidence="1">Glycolipid biosynthesis; lipid IV(A) biosynthesis; lipid IV(A) from (3R)-3-hydroxytetradecanoyl-[acyl-carrier-protein] and UDP-N-acetyl-alpha-D-glucosamine: step 6/6.</text>
</comment>
<comment type="similarity">
    <text evidence="1">Belongs to the LpxK family.</text>
</comment>
<sequence>MVSEAPPFWWQKAGWQAWLLSPFSLLYGKVAGRRMRTAKRANVPVPVICIGNFTVGGAGKTPTAIAIARAAVARGMKPGFLSRGYGGTLDVTTLVDAQHHRAAAVGDEPLLLAREAVTVISRRRVEGAHRLVKEGVNLIIMDDGFQSARLTLDYALVVIDTVRGIGNGHLVPGGPVRAPLAEQMRQMTGLLKVGKGHAADPLVRQAAKAAKPVFVAAIMPQEPEDFRGKRVLAFAGIADPAKFYRTVEALGGDIVLSRSFPDHHHFSDDEIDDLLKDARKENLQLVTTAKDAVRLNGHHGRAEELLWNSQVIEIDMVFDDPNAAGTVIETAVVNCRARLLRDNARSST</sequence>
<name>LPXK_AGRFC</name>